<organismHost>
    <name type="scientific">Lepidoptera</name>
    <name type="common">butterflies and moths</name>
    <dbReference type="NCBI Taxonomy" id="7088"/>
</organismHost>
<accession>P41453</accession>
<comment type="function">
    <text evidence="2 3 5 6 8">Single-stranded DNA-binding protein that plays a role in viral DNA replication. Forms a stable complex with the alkaline nuclease and mediates the transport of the helicase to the host nucleus.</text>
</comment>
<comment type="subunit">
    <text evidence="1 2 4 7">Homotrimer. Interacts with alkaline nuclease. Interacts with HELI and IE1.</text>
</comment>
<comment type="subcellular location">
    <subcellularLocation>
        <location evidence="3 4 8">Host nucleus</location>
    </subcellularLocation>
</comment>
<comment type="similarity">
    <text evidence="9">Belongs to the baculoviridae LEF-3 family.</text>
</comment>
<name>LEF3_NPVAC</name>
<dbReference type="EMBL" id="L18873">
    <property type="protein sequence ID" value="AAA02964.1"/>
    <property type="molecule type" value="Genomic_DNA"/>
</dbReference>
<dbReference type="EMBL" id="L22858">
    <property type="protein sequence ID" value="AAA66697.1"/>
    <property type="molecule type" value="Genomic_DNA"/>
</dbReference>
<dbReference type="PIR" id="D72858">
    <property type="entry name" value="D72858"/>
</dbReference>
<dbReference type="SMR" id="P41453"/>
<dbReference type="KEGG" id="vg:1403900"/>
<dbReference type="OrthoDB" id="5804at10239"/>
<dbReference type="Proteomes" id="UP000008292">
    <property type="component" value="Segment"/>
</dbReference>
<dbReference type="GO" id="GO:0039715">
    <property type="term" value="C:nuclear viral factory"/>
    <property type="evidence" value="ECO:0000314"/>
    <property type="project" value="UniProtKB"/>
</dbReference>
<dbReference type="GO" id="GO:0003677">
    <property type="term" value="F:DNA binding"/>
    <property type="evidence" value="ECO:0007669"/>
    <property type="project" value="UniProtKB-KW"/>
</dbReference>
<dbReference type="GO" id="GO:0006355">
    <property type="term" value="P:regulation of DNA-templated transcription"/>
    <property type="evidence" value="ECO:0007669"/>
    <property type="project" value="InterPro"/>
</dbReference>
<dbReference type="GO" id="GO:0019079">
    <property type="term" value="P:viral genome replication"/>
    <property type="evidence" value="ECO:0000314"/>
    <property type="project" value="UniProtKB"/>
</dbReference>
<dbReference type="InterPro" id="IPR008415">
    <property type="entry name" value="Baculo_LEF-3"/>
</dbReference>
<dbReference type="Pfam" id="PF05847">
    <property type="entry name" value="Baculo_LEF-3"/>
    <property type="match status" value="1"/>
</dbReference>
<protein>
    <recommendedName>
        <fullName>Late expression factor 3</fullName>
        <shortName>LEF-3</shortName>
    </recommendedName>
    <alternativeName>
        <fullName>Single-stranded DNA-binding protein</fullName>
        <shortName>SSB</shortName>
    </alternativeName>
</protein>
<reference key="1">
    <citation type="journal article" date="1993" name="J. Virol.">
        <title>Identification, sequence, and transcriptional mapping of lef-3, a baculovirus gene involved in late and very late gene expression.</title>
        <authorList>
            <person name="Li Y."/>
            <person name="Passarelli A.L."/>
            <person name="Miller L.K."/>
        </authorList>
    </citation>
    <scope>NUCLEOTIDE SEQUENCE [GENOMIC DNA]</scope>
    <scope>FUNCTION</scope>
    <source>
        <strain>L1</strain>
    </source>
</reference>
<reference key="2">
    <citation type="journal article" date="1994" name="Virology">
        <title>The complete DNA sequence of Autographa californica nuclear polyhedrosis virus.</title>
        <authorList>
            <person name="Ayres M.D."/>
            <person name="Howard S.C."/>
            <person name="Kuzio J."/>
            <person name="Lopez-Ferber M."/>
            <person name="Possee R.D."/>
        </authorList>
    </citation>
    <scope>NUCLEOTIDE SEQUENCE [LARGE SCALE GENOMIC DNA]</scope>
    <source>
        <strain>C6</strain>
    </source>
</reference>
<reference key="3">
    <citation type="journal article" date="1995" name="J. Virol.">
        <title>The lef-3 gene of Autographa californica nuclear polyhedrosis virus encodes a single-stranded DNA-binding protein.</title>
        <authorList>
            <person name="Hang X."/>
            <person name="Dong W."/>
            <person name="Guarino L.A."/>
        </authorList>
    </citation>
    <scope>FUNCTION</scope>
</reference>
<reference key="4">
    <citation type="journal article" date="1997" name="J. Virol.">
        <title>The baculovirus single-stranded DNA binding protein, LEF-3, forms a homotrimer in solution.</title>
        <authorList>
            <person name="Evans J.T."/>
            <person name="Rohrmann G.F."/>
        </authorList>
    </citation>
    <scope>SUBUNIT</scope>
</reference>
<reference key="5">
    <citation type="journal article" date="1998" name="Virology">
        <title>A baculovirus single-stranded DNA binding protein, LEF-3, mediates the nuclear localization of the putative helicase P143.</title>
        <authorList>
            <person name="Wu Y."/>
            <person name="Carstens E.B."/>
        </authorList>
    </citation>
    <scope>FUNCTION</scope>
    <scope>SUBCELLULAR LOCATION</scope>
</reference>
<reference key="6">
    <citation type="journal article" date="2003" name="J. Virol.">
        <title>Baculovirus alkaline nuclease possesses a 5'--&gt;3' exonuclease activity and associates with the DNA-binding protein LEF-3.</title>
        <authorList>
            <person name="Mikhailov V.S."/>
            <person name="Okano K."/>
            <person name="Rohrmann G.F."/>
        </authorList>
    </citation>
    <scope>INTERACTION WITH ALKALINE NUCLEASE</scope>
    <source>
        <strain>E2</strain>
    </source>
</reference>
<reference key="7">
    <citation type="journal article" date="2004" name="Virology">
        <title>Baculovirus proteins IE-1, LEF-3, and P143 interact with DNA in vivo: a formaldehyde cross-linking study.</title>
        <authorList>
            <person name="Ito E."/>
            <person name="Sahri D."/>
            <person name="Knippers R."/>
            <person name="Carstens E.B."/>
        </authorList>
    </citation>
    <scope>FUNCTION</scope>
    <scope>INTERACTION WITH HELI AND IE1</scope>
</reference>
<reference key="8">
    <citation type="journal article" date="2005" name="J. Virol.">
        <title>Identification of domains in Autographa californica multiple nucleopolyhedrovirus late expression factor 3 required for nuclear transport of P143.</title>
        <authorList>
            <person name="Chen Z."/>
            <person name="Carstens E.B."/>
        </authorList>
    </citation>
    <scope>FUNCTION</scope>
    <scope>SUBCELLULAR LOCATION</scope>
</reference>
<reference key="9">
    <citation type="journal article" date="2009" name="Virology">
        <title>Characterization of a baculovirus nuclear localization signal domain in the late expression factor 3 protein.</title>
        <authorList>
            <person name="Au V."/>
            <person name="Yu M."/>
            <person name="Carstens E.B."/>
        </authorList>
    </citation>
    <scope>SUBCELLULAR LOCATION</scope>
    <scope>INTERACTION WITH HELI</scope>
    <scope>NUCLEAR LOCALIZATION SIGNAL</scope>
</reference>
<organism>
    <name type="scientific">Autographa californica nuclear polyhedrosis virus</name>
    <name type="common">AcMNPV</name>
    <dbReference type="NCBI Taxonomy" id="46015"/>
    <lineage>
        <taxon>Viruses</taxon>
        <taxon>Viruses incertae sedis</taxon>
        <taxon>Naldaviricetes</taxon>
        <taxon>Lefavirales</taxon>
        <taxon>Baculoviridae</taxon>
        <taxon>Alphabaculovirus</taxon>
        <taxon>Alphabaculovirus aucalifornicae</taxon>
    </lineage>
</organism>
<gene>
    <name type="primary">LEF-3</name>
</gene>
<feature type="chain" id="PRO_0000132822" description="Late expression factor 3">
    <location>
        <begin position="1"/>
        <end position="385"/>
    </location>
</feature>
<feature type="region of interest" description="Nuclear localization signal" evidence="4">
    <location>
        <begin position="26"/>
        <end position="32"/>
    </location>
</feature>
<evidence type="ECO:0000269" key="1">
    <source>
    </source>
</evidence>
<evidence type="ECO:0000269" key="2">
    <source>
    </source>
</evidence>
<evidence type="ECO:0000269" key="3">
    <source>
    </source>
</evidence>
<evidence type="ECO:0000269" key="4">
    <source>
    </source>
</evidence>
<evidence type="ECO:0000269" key="5">
    <source>
    </source>
</evidence>
<evidence type="ECO:0000269" key="6">
    <source>
    </source>
</evidence>
<evidence type="ECO:0000269" key="7">
    <source>
    </source>
</evidence>
<evidence type="ECO:0000269" key="8">
    <source>
    </source>
</evidence>
<evidence type="ECO:0000305" key="9"/>
<proteinExistence type="evidence at protein level"/>
<keyword id="KW-0238">DNA-binding</keyword>
<keyword id="KW-0244">Early protein</keyword>
<keyword id="KW-1048">Host nucleus</keyword>
<keyword id="KW-1185">Reference proteome</keyword>
<keyword id="KW-0804">Transcription</keyword>
<keyword id="KW-0805">Transcription regulation</keyword>
<sequence>MATKRSLSGESSGEPLIKRMAMASSPKKIRENYKRISGKLMSKMTLSIDNEYHYTFRIMSDNKIQEYYGDSQSFKDMEEGKCYDISLNYVKTKFSQMIQINEYKECEMEIETATPMSDYLTNKHFENEDGVNIIVKYKFIYKKINSGLYKVVFEVVYKNLNDDPDVVQVECSVNAKTLINLFKNNIKGSDDINEVFKYLKDNENQIFTIYSIKCQQIFNGSNVYMNWNVVNSTRIELCEAKESEAYSNLQNCTNAKINISRSNKHVASYNVNVLKSELEENDMGDNKFIVQFKSDELNIADSDDCSTSSDLGKWNKSVFYVNTNKKTEADSLQKLCADFNQISMLLEDNLIKVTIYVTVENGENHNMNVLGLLKYDEDENEYKFL</sequence>